<organism>
    <name type="scientific">Bartonella bacilliformis (strain ATCC 35685 / KC583 / Herrer 020/F12,63)</name>
    <dbReference type="NCBI Taxonomy" id="360095"/>
    <lineage>
        <taxon>Bacteria</taxon>
        <taxon>Pseudomonadati</taxon>
        <taxon>Pseudomonadota</taxon>
        <taxon>Alphaproteobacteria</taxon>
        <taxon>Hyphomicrobiales</taxon>
        <taxon>Bartonellaceae</taxon>
        <taxon>Bartonella</taxon>
    </lineage>
</organism>
<reference key="1">
    <citation type="submission" date="2006-12" db="EMBL/GenBank/DDBJ databases">
        <authorList>
            <person name="Hendrix L."/>
            <person name="Mohamoud Y."/>
            <person name="Radune D."/>
            <person name="Shvartsbeyn A."/>
            <person name="Daugherty S."/>
            <person name="Dodson R."/>
            <person name="Durkin A.S."/>
            <person name="Harkins D."/>
            <person name="Huot H."/>
            <person name="Kothari S.P."/>
            <person name="Madupu R."/>
            <person name="Li J."/>
            <person name="Nelson W.C."/>
            <person name="Shrivastava S."/>
            <person name="Giglio M.G."/>
            <person name="Haft D."/>
            <person name="Selengut J."/>
            <person name="Fraser-Ligget C."/>
            <person name="Seshadri R."/>
        </authorList>
    </citation>
    <scope>NUCLEOTIDE SEQUENCE [LARGE SCALE GENOMIC DNA]</scope>
    <source>
        <strain>ATCC 35685 / KC583 / Herrer 020/F12,63</strain>
    </source>
</reference>
<protein>
    <recommendedName>
        <fullName evidence="1">Putative pyruvate, phosphate dikinase regulatory protein</fullName>
        <shortName evidence="1">PPDK regulatory protein</shortName>
        <ecNumber evidence="1">2.7.11.32</ecNumber>
        <ecNumber evidence="1">2.7.4.27</ecNumber>
    </recommendedName>
</protein>
<keyword id="KW-0418">Kinase</keyword>
<keyword id="KW-0547">Nucleotide-binding</keyword>
<keyword id="KW-0723">Serine/threonine-protein kinase</keyword>
<keyword id="KW-0808">Transferase</keyword>
<dbReference type="EC" id="2.7.11.32" evidence="1"/>
<dbReference type="EC" id="2.7.4.27" evidence="1"/>
<dbReference type="EMBL" id="CP000524">
    <property type="protein sequence ID" value="ABM44519.1"/>
    <property type="molecule type" value="Genomic_DNA"/>
</dbReference>
<dbReference type="RefSeq" id="WP_011807237.1">
    <property type="nucleotide sequence ID" value="NC_008783.1"/>
</dbReference>
<dbReference type="SMR" id="A1UQU4"/>
<dbReference type="STRING" id="360095.BARBAKC583_0008"/>
<dbReference type="GeneID" id="4683852"/>
<dbReference type="KEGG" id="bbk:BARBAKC583_0008"/>
<dbReference type="PATRIC" id="fig|360095.6.peg.8"/>
<dbReference type="eggNOG" id="COG1806">
    <property type="taxonomic scope" value="Bacteria"/>
</dbReference>
<dbReference type="HOGENOM" id="CLU_046206_2_0_5"/>
<dbReference type="OrthoDB" id="9782201at2"/>
<dbReference type="Proteomes" id="UP000000643">
    <property type="component" value="Chromosome"/>
</dbReference>
<dbReference type="GO" id="GO:0043531">
    <property type="term" value="F:ADP binding"/>
    <property type="evidence" value="ECO:0007669"/>
    <property type="project" value="UniProtKB-UniRule"/>
</dbReference>
<dbReference type="GO" id="GO:0005524">
    <property type="term" value="F:ATP binding"/>
    <property type="evidence" value="ECO:0007669"/>
    <property type="project" value="InterPro"/>
</dbReference>
<dbReference type="GO" id="GO:0016776">
    <property type="term" value="F:phosphotransferase activity, phosphate group as acceptor"/>
    <property type="evidence" value="ECO:0007669"/>
    <property type="project" value="UniProtKB-UniRule"/>
</dbReference>
<dbReference type="GO" id="GO:0004674">
    <property type="term" value="F:protein serine/threonine kinase activity"/>
    <property type="evidence" value="ECO:0007669"/>
    <property type="project" value="UniProtKB-UniRule"/>
</dbReference>
<dbReference type="HAMAP" id="MF_00921">
    <property type="entry name" value="PDRP"/>
    <property type="match status" value="1"/>
</dbReference>
<dbReference type="InterPro" id="IPR005177">
    <property type="entry name" value="Kinase-pyrophosphorylase"/>
</dbReference>
<dbReference type="InterPro" id="IPR026565">
    <property type="entry name" value="PPDK_reg"/>
</dbReference>
<dbReference type="NCBIfam" id="NF003742">
    <property type="entry name" value="PRK05339.1"/>
    <property type="match status" value="1"/>
</dbReference>
<dbReference type="PANTHER" id="PTHR31756">
    <property type="entry name" value="PYRUVATE, PHOSPHATE DIKINASE REGULATORY PROTEIN 1, CHLOROPLASTIC"/>
    <property type="match status" value="1"/>
</dbReference>
<dbReference type="PANTHER" id="PTHR31756:SF3">
    <property type="entry name" value="PYRUVATE, PHOSPHATE DIKINASE REGULATORY PROTEIN 1, CHLOROPLASTIC"/>
    <property type="match status" value="1"/>
</dbReference>
<dbReference type="Pfam" id="PF03618">
    <property type="entry name" value="Kinase-PPPase"/>
    <property type="match status" value="1"/>
</dbReference>
<accession>A1UQU4</accession>
<name>PDRP_BARBK</name>
<sequence length="279" mass="31712">MKKEKNFFHLYMVSDATGETLISAGKAVASQYPTIQPIEHIYPMIRNKTQLQRVLDEIQREPGIVLYTIIDQEIKQLLSRECTKIGVPCAAVLDPVLNVFQSYLGTPKNLRVSAQHDLNTDYFRRIEALDFTIEHDDGQSSDDLFNADVILVGISRTSKTPTSIYLANRGIKTANVPLIPGIDLPKALLEEKNSLIIGLIASAERISHVRQNRELGKDVSIERYTDRVNIAEELTYAKRICERFGWPIIDVTRRSIEETAAAVFELLSRFREEKLREIL</sequence>
<feature type="chain" id="PRO_0000316637" description="Putative pyruvate, phosphate dikinase regulatory protein">
    <location>
        <begin position="1"/>
        <end position="279"/>
    </location>
</feature>
<feature type="binding site" evidence="1">
    <location>
        <begin position="153"/>
        <end position="160"/>
    </location>
    <ligand>
        <name>ADP</name>
        <dbReference type="ChEBI" id="CHEBI:456216"/>
    </ligand>
</feature>
<evidence type="ECO:0000255" key="1">
    <source>
        <dbReference type="HAMAP-Rule" id="MF_00921"/>
    </source>
</evidence>
<gene>
    <name type="ordered locus">BARBAKC583_0008</name>
</gene>
<comment type="function">
    <text evidence="1">Bifunctional serine/threonine kinase and phosphorylase involved in the regulation of the pyruvate, phosphate dikinase (PPDK) by catalyzing its phosphorylation/dephosphorylation.</text>
</comment>
<comment type="catalytic activity">
    <reaction evidence="1">
        <text>N(tele)-phospho-L-histidyl/L-threonyl-[pyruvate, phosphate dikinase] + ADP = N(tele)-phospho-L-histidyl/O-phospho-L-threonyl-[pyruvate, phosphate dikinase] + AMP + H(+)</text>
        <dbReference type="Rhea" id="RHEA:43692"/>
        <dbReference type="Rhea" id="RHEA-COMP:10650"/>
        <dbReference type="Rhea" id="RHEA-COMP:10651"/>
        <dbReference type="ChEBI" id="CHEBI:15378"/>
        <dbReference type="ChEBI" id="CHEBI:30013"/>
        <dbReference type="ChEBI" id="CHEBI:61977"/>
        <dbReference type="ChEBI" id="CHEBI:83586"/>
        <dbReference type="ChEBI" id="CHEBI:456215"/>
        <dbReference type="ChEBI" id="CHEBI:456216"/>
        <dbReference type="EC" id="2.7.11.32"/>
    </reaction>
</comment>
<comment type="catalytic activity">
    <reaction evidence="1">
        <text>N(tele)-phospho-L-histidyl/O-phospho-L-threonyl-[pyruvate, phosphate dikinase] + phosphate + H(+) = N(tele)-phospho-L-histidyl/L-threonyl-[pyruvate, phosphate dikinase] + diphosphate</text>
        <dbReference type="Rhea" id="RHEA:43696"/>
        <dbReference type="Rhea" id="RHEA-COMP:10650"/>
        <dbReference type="Rhea" id="RHEA-COMP:10651"/>
        <dbReference type="ChEBI" id="CHEBI:15378"/>
        <dbReference type="ChEBI" id="CHEBI:30013"/>
        <dbReference type="ChEBI" id="CHEBI:33019"/>
        <dbReference type="ChEBI" id="CHEBI:43474"/>
        <dbReference type="ChEBI" id="CHEBI:61977"/>
        <dbReference type="ChEBI" id="CHEBI:83586"/>
        <dbReference type="EC" id="2.7.4.27"/>
    </reaction>
</comment>
<comment type="similarity">
    <text evidence="1">Belongs to the pyruvate, phosphate/water dikinase regulatory protein family. PDRP subfamily.</text>
</comment>
<proteinExistence type="inferred from homology"/>